<keyword id="KW-0053">Apoptosis</keyword>
<keyword id="KW-0067">ATP-binding</keyword>
<keyword id="KW-0175">Coiled coil</keyword>
<keyword id="KW-0963">Cytoplasm</keyword>
<keyword id="KW-0418">Kinase</keyword>
<keyword id="KW-0460">Magnesium</keyword>
<keyword id="KW-0479">Metal-binding</keyword>
<keyword id="KW-0547">Nucleotide-binding</keyword>
<keyword id="KW-0539">Nucleus</keyword>
<keyword id="KW-0597">Phosphoprotein</keyword>
<keyword id="KW-1185">Reference proteome</keyword>
<keyword id="KW-0723">Serine/threonine-protein kinase</keyword>
<keyword id="KW-0808">Transferase</keyword>
<feature type="chain" id="PRO_0000247766" description="Serine/threonine-protein kinase 3">
    <location>
        <begin position="1"/>
        <end position="493"/>
    </location>
</feature>
<feature type="chain" id="PRO_0000413721" description="Serine/threonine-protein kinase 3 36kDa subunit">
    <location>
        <begin position="1"/>
        <end position="321"/>
    </location>
</feature>
<feature type="chain" id="PRO_0000413722" description="Serine/threonine-protein kinase 3 20kDa subunit">
    <location>
        <begin position="322"/>
        <end position="493"/>
    </location>
</feature>
<feature type="domain" description="Protein kinase" evidence="4">
    <location>
        <begin position="26"/>
        <end position="277"/>
    </location>
</feature>
<feature type="domain" description="SARAH" evidence="5">
    <location>
        <begin position="439"/>
        <end position="486"/>
    </location>
</feature>
<feature type="region of interest" description="Disordered" evidence="6">
    <location>
        <begin position="303"/>
        <end position="336"/>
    </location>
</feature>
<feature type="region of interest" description="Disordered" evidence="6">
    <location>
        <begin position="369"/>
        <end position="414"/>
    </location>
</feature>
<feature type="coiled-coil region" evidence="3">
    <location>
        <begin position="286"/>
        <end position="327"/>
    </location>
</feature>
<feature type="coiled-coil region" evidence="3">
    <location>
        <begin position="444"/>
        <end position="477"/>
    </location>
</feature>
<feature type="compositionally biased region" description="Acidic residues" evidence="6">
    <location>
        <begin position="308"/>
        <end position="320"/>
    </location>
</feature>
<feature type="compositionally biased region" description="Polar residues" evidence="6">
    <location>
        <begin position="325"/>
        <end position="336"/>
    </location>
</feature>
<feature type="compositionally biased region" description="Acidic residues" evidence="6">
    <location>
        <begin position="369"/>
        <end position="378"/>
    </location>
</feature>
<feature type="compositionally biased region" description="Basic and acidic residues" evidence="6">
    <location>
        <begin position="398"/>
        <end position="410"/>
    </location>
</feature>
<feature type="active site" description="Proton acceptor" evidence="4">
    <location>
        <position position="145"/>
    </location>
</feature>
<feature type="binding site" evidence="4">
    <location>
        <begin position="32"/>
        <end position="40"/>
    </location>
    <ligand>
        <name>ATP</name>
        <dbReference type="ChEBI" id="CHEBI:30616"/>
    </ligand>
</feature>
<feature type="binding site" evidence="4">
    <location>
        <position position="55"/>
    </location>
    <ligand>
        <name>ATP</name>
        <dbReference type="ChEBI" id="CHEBI:30616"/>
    </ligand>
</feature>
<feature type="site" description="Cleavage; by caspase-3" evidence="1">
    <location>
        <begin position="321"/>
        <end position="322"/>
    </location>
</feature>
<feature type="modified residue" description="Phosphothreonine; by autocatalysis" evidence="1">
    <location>
        <position position="179"/>
    </location>
</feature>
<organism>
    <name type="scientific">Xenopus laevis</name>
    <name type="common">African clawed frog</name>
    <dbReference type="NCBI Taxonomy" id="8355"/>
    <lineage>
        <taxon>Eukaryota</taxon>
        <taxon>Metazoa</taxon>
        <taxon>Chordata</taxon>
        <taxon>Craniata</taxon>
        <taxon>Vertebrata</taxon>
        <taxon>Euteleostomi</taxon>
        <taxon>Amphibia</taxon>
        <taxon>Batrachia</taxon>
        <taxon>Anura</taxon>
        <taxon>Pipoidea</taxon>
        <taxon>Pipidae</taxon>
        <taxon>Xenopodinae</taxon>
        <taxon>Xenopus</taxon>
        <taxon>Xenopus</taxon>
    </lineage>
</organism>
<evidence type="ECO:0000250" key="1"/>
<evidence type="ECO:0000250" key="2">
    <source>
        <dbReference type="UniProtKB" id="Q13188"/>
    </source>
</evidence>
<evidence type="ECO:0000255" key="3"/>
<evidence type="ECO:0000255" key="4">
    <source>
        <dbReference type="PROSITE-ProRule" id="PRU00159"/>
    </source>
</evidence>
<evidence type="ECO:0000255" key="5">
    <source>
        <dbReference type="PROSITE-ProRule" id="PRU00310"/>
    </source>
</evidence>
<evidence type="ECO:0000256" key="6">
    <source>
        <dbReference type="SAM" id="MobiDB-lite"/>
    </source>
</evidence>
<evidence type="ECO:0000305" key="7"/>
<proteinExistence type="evidence at transcript level"/>
<dbReference type="EC" id="2.7.11.1"/>
<dbReference type="EMBL" id="BC072113">
    <property type="protein sequence ID" value="AAH72113.1"/>
    <property type="molecule type" value="mRNA"/>
</dbReference>
<dbReference type="RefSeq" id="NP_001085133.1">
    <property type="nucleotide sequence ID" value="NM_001091664.1"/>
</dbReference>
<dbReference type="SMR" id="Q6IP06"/>
<dbReference type="DNASU" id="432210"/>
<dbReference type="GeneID" id="432210"/>
<dbReference type="KEGG" id="xla:432210"/>
<dbReference type="AGR" id="Xenbase:XB-GENE-960737"/>
<dbReference type="CTD" id="432210"/>
<dbReference type="Xenbase" id="XB-GENE-960737">
    <property type="gene designation" value="stk3.S"/>
</dbReference>
<dbReference type="OMA" id="LNQISHP"/>
<dbReference type="OrthoDB" id="8693905at2759"/>
<dbReference type="Proteomes" id="UP000186698">
    <property type="component" value="Chromosome 6S"/>
</dbReference>
<dbReference type="Bgee" id="432210">
    <property type="expression patterns" value="Expressed in blastula and 18 other cell types or tissues"/>
</dbReference>
<dbReference type="GO" id="GO:0005737">
    <property type="term" value="C:cytoplasm"/>
    <property type="evidence" value="ECO:0000250"/>
    <property type="project" value="UniProtKB"/>
</dbReference>
<dbReference type="GO" id="GO:0005634">
    <property type="term" value="C:nucleus"/>
    <property type="evidence" value="ECO:0000250"/>
    <property type="project" value="UniProtKB"/>
</dbReference>
<dbReference type="GO" id="GO:0005524">
    <property type="term" value="F:ATP binding"/>
    <property type="evidence" value="ECO:0007669"/>
    <property type="project" value="UniProtKB-KW"/>
</dbReference>
<dbReference type="GO" id="GO:0046872">
    <property type="term" value="F:metal ion binding"/>
    <property type="evidence" value="ECO:0007669"/>
    <property type="project" value="UniProtKB-KW"/>
</dbReference>
<dbReference type="GO" id="GO:0004672">
    <property type="term" value="F:protein kinase activity"/>
    <property type="evidence" value="ECO:0000250"/>
    <property type="project" value="UniProtKB"/>
</dbReference>
<dbReference type="GO" id="GO:0106310">
    <property type="term" value="F:protein serine kinase activity"/>
    <property type="evidence" value="ECO:0007669"/>
    <property type="project" value="RHEA"/>
</dbReference>
<dbReference type="GO" id="GO:0004674">
    <property type="term" value="F:protein serine/threonine kinase activity"/>
    <property type="evidence" value="ECO:0000318"/>
    <property type="project" value="GO_Central"/>
</dbReference>
<dbReference type="GO" id="GO:0006915">
    <property type="term" value="P:apoptotic process"/>
    <property type="evidence" value="ECO:0007669"/>
    <property type="project" value="UniProtKB-KW"/>
</dbReference>
<dbReference type="GO" id="GO:0035329">
    <property type="term" value="P:hippo signaling"/>
    <property type="evidence" value="ECO:0000250"/>
    <property type="project" value="UniProtKB"/>
</dbReference>
<dbReference type="GO" id="GO:0035556">
    <property type="term" value="P:intracellular signal transduction"/>
    <property type="evidence" value="ECO:0000318"/>
    <property type="project" value="GO_Central"/>
</dbReference>
<dbReference type="GO" id="GO:0090090">
    <property type="term" value="P:negative regulation of canonical Wnt signaling pathway"/>
    <property type="evidence" value="ECO:0000318"/>
    <property type="project" value="GO_Central"/>
</dbReference>
<dbReference type="GO" id="GO:0043065">
    <property type="term" value="P:positive regulation of apoptotic process"/>
    <property type="evidence" value="ECO:0000318"/>
    <property type="project" value="GO_Central"/>
</dbReference>
<dbReference type="GO" id="GO:0051262">
    <property type="term" value="P:protein tetramerization"/>
    <property type="evidence" value="ECO:0007669"/>
    <property type="project" value="InterPro"/>
</dbReference>
<dbReference type="GO" id="GO:0043408">
    <property type="term" value="P:regulation of MAPK cascade"/>
    <property type="evidence" value="ECO:0000318"/>
    <property type="project" value="GO_Central"/>
</dbReference>
<dbReference type="CDD" id="cd21888">
    <property type="entry name" value="SARAH_MST2"/>
    <property type="match status" value="1"/>
</dbReference>
<dbReference type="CDD" id="cd06612">
    <property type="entry name" value="STKc_MST1_2"/>
    <property type="match status" value="1"/>
</dbReference>
<dbReference type="FunFam" id="1.10.287.4270:FF:000001">
    <property type="entry name" value="Serine/threonine-protein kinase 3"/>
    <property type="match status" value="1"/>
</dbReference>
<dbReference type="FunFam" id="1.10.510.10:FF:000075">
    <property type="entry name" value="Serine/threonine-protein kinase 3"/>
    <property type="match status" value="1"/>
</dbReference>
<dbReference type="FunFam" id="3.30.200.20:FF:000410">
    <property type="entry name" value="Serine/threonine-protein kinase 3"/>
    <property type="match status" value="1"/>
</dbReference>
<dbReference type="FunFam" id="4.10.170.10:FF:000002">
    <property type="entry name" value="serine/threonine-protein kinase 3"/>
    <property type="match status" value="1"/>
</dbReference>
<dbReference type="Gene3D" id="1.10.287.4270">
    <property type="match status" value="1"/>
</dbReference>
<dbReference type="Gene3D" id="4.10.170.10">
    <property type="entry name" value="p53-like tetramerisation domain"/>
    <property type="match status" value="1"/>
</dbReference>
<dbReference type="Gene3D" id="1.10.510.10">
    <property type="entry name" value="Transferase(Phosphotransferase) domain 1"/>
    <property type="match status" value="1"/>
</dbReference>
<dbReference type="InterPro" id="IPR011009">
    <property type="entry name" value="Kinase-like_dom_sf"/>
</dbReference>
<dbReference type="InterPro" id="IPR024205">
    <property type="entry name" value="Mst1_2_SARAH_domain"/>
</dbReference>
<dbReference type="InterPro" id="IPR049568">
    <property type="entry name" value="Mst2_SARAH"/>
</dbReference>
<dbReference type="InterPro" id="IPR036674">
    <property type="entry name" value="p53_tetramer_sf"/>
</dbReference>
<dbReference type="InterPro" id="IPR000719">
    <property type="entry name" value="Prot_kinase_dom"/>
</dbReference>
<dbReference type="InterPro" id="IPR017441">
    <property type="entry name" value="Protein_kinase_ATP_BS"/>
</dbReference>
<dbReference type="InterPro" id="IPR011524">
    <property type="entry name" value="SARAH_dom"/>
</dbReference>
<dbReference type="InterPro" id="IPR050629">
    <property type="entry name" value="STE20/SPS1-PAK"/>
</dbReference>
<dbReference type="PANTHER" id="PTHR48012:SF2">
    <property type="entry name" value="STERILE20-LIKE KINASE, ISOFORM B"/>
    <property type="match status" value="1"/>
</dbReference>
<dbReference type="PANTHER" id="PTHR48012">
    <property type="entry name" value="STERILE20-LIKE KINASE, ISOFORM B-RELATED"/>
    <property type="match status" value="1"/>
</dbReference>
<dbReference type="Pfam" id="PF11629">
    <property type="entry name" value="Mst1_SARAH"/>
    <property type="match status" value="1"/>
</dbReference>
<dbReference type="Pfam" id="PF00069">
    <property type="entry name" value="Pkinase"/>
    <property type="match status" value="1"/>
</dbReference>
<dbReference type="SMART" id="SM00220">
    <property type="entry name" value="S_TKc"/>
    <property type="match status" value="1"/>
</dbReference>
<dbReference type="SUPFAM" id="SSF56112">
    <property type="entry name" value="Protein kinase-like (PK-like)"/>
    <property type="match status" value="1"/>
</dbReference>
<dbReference type="PROSITE" id="PS00107">
    <property type="entry name" value="PROTEIN_KINASE_ATP"/>
    <property type="match status" value="1"/>
</dbReference>
<dbReference type="PROSITE" id="PS50011">
    <property type="entry name" value="PROTEIN_KINASE_DOM"/>
    <property type="match status" value="1"/>
</dbReference>
<dbReference type="PROSITE" id="PS50951">
    <property type="entry name" value="SARAH"/>
    <property type="match status" value="1"/>
</dbReference>
<gene>
    <name type="primary">stk3</name>
</gene>
<reference key="1">
    <citation type="submission" date="2004-06" db="EMBL/GenBank/DDBJ databases">
        <authorList>
            <consortium name="NIH - Xenopus Gene Collection (XGC) project"/>
        </authorList>
    </citation>
    <scope>NUCLEOTIDE SEQUENCE [LARGE SCALE MRNA]</scope>
    <source>
        <tissue>Ovary</tissue>
    </source>
</reference>
<sequence>MEQPAPKSKLKKLSEDSLTKQPEEVFDVLEKLGEGSYGSVFKAIHKESGQVVAIKQVPVESDLQEIIKEISIMQQCDSHYVVKYYGSYFKNTDLWIVMEYCGAGSVSDIIRLRNKTLTEDEIATILRSTLKGLEYLHFMRKIHRDIKAGNILLNTEGHAKLADFGVAGQLTDTMAKRNTVIGTPFWMAPEVIQEIGYNCVADIWSLGITSIEMAEGKPPYADIHPMRAIFMIPTNPPPTFRKPELWTDEFTDFVKKCLVKNPEQRATATQLLQHPFIKNAKPVSILRDLITEAMDIKAKRHEELQRELEEEDENSEEDELDSHTMVKTNSESAGTMRAASTMSEGAQTMIEHNSTMLESDLGTMVINSDDEEEEEEEDGTMKRNATSPQGPRPSFMDYFDKQDSKNKPHDNCNQNLHEQYHISKNVFPDNWKVPPDGDFDFLKNLSFEELQMRLKALDPMMEREIEDLRQRYNAKRQPILDAMDAKKRRQQNF</sequence>
<accession>Q6IP06</accession>
<name>STK3_XENLA</name>
<comment type="function">
    <text evidence="2">Stress-activated, pro-apoptotic kinase which, following caspase-cleavage, enters the nucleus and induces chromatin condensation followed by internucleosomal DNA fragmentation. Key component of the Hippo signaling pathway which plays a pivotal role in organ size control and tumor suppression by restricting proliferation and promoting apoptosis. The core of this pathway is composed of a kinase cascade wherein stk3/mst2 and stk4/mst1, in complex with its regulatory protein sav1, phosphorylates and activates lats1/2 in complex with its regulatory protein mob1, which in turn phosphorylates and inactivates yap1 oncoprotein and wwtr1/taz. Phosphorylation of yap1 by lats2 inhibits its translocation into the nucleus to regulate cellular genes important for cell proliferation, cell death, and cell migration.</text>
</comment>
<comment type="catalytic activity">
    <reaction>
        <text>L-seryl-[protein] + ATP = O-phospho-L-seryl-[protein] + ADP + H(+)</text>
        <dbReference type="Rhea" id="RHEA:17989"/>
        <dbReference type="Rhea" id="RHEA-COMP:9863"/>
        <dbReference type="Rhea" id="RHEA-COMP:11604"/>
        <dbReference type="ChEBI" id="CHEBI:15378"/>
        <dbReference type="ChEBI" id="CHEBI:29999"/>
        <dbReference type="ChEBI" id="CHEBI:30616"/>
        <dbReference type="ChEBI" id="CHEBI:83421"/>
        <dbReference type="ChEBI" id="CHEBI:456216"/>
        <dbReference type="EC" id="2.7.11.1"/>
    </reaction>
</comment>
<comment type="catalytic activity">
    <reaction>
        <text>L-threonyl-[protein] + ATP = O-phospho-L-threonyl-[protein] + ADP + H(+)</text>
        <dbReference type="Rhea" id="RHEA:46608"/>
        <dbReference type="Rhea" id="RHEA-COMP:11060"/>
        <dbReference type="Rhea" id="RHEA-COMP:11605"/>
        <dbReference type="ChEBI" id="CHEBI:15378"/>
        <dbReference type="ChEBI" id="CHEBI:30013"/>
        <dbReference type="ChEBI" id="CHEBI:30616"/>
        <dbReference type="ChEBI" id="CHEBI:61977"/>
        <dbReference type="ChEBI" id="CHEBI:456216"/>
        <dbReference type="EC" id="2.7.11.1"/>
    </reaction>
</comment>
<comment type="cofactor">
    <cofactor evidence="1">
        <name>Mg(2+)</name>
        <dbReference type="ChEBI" id="CHEBI:18420"/>
    </cofactor>
</comment>
<comment type="activity regulation">
    <text evidence="1">Inhibited by the C-terminal non-catalytic region. Activated by caspase-cleavage. Full activation also requires homodimerization and autophosphorylation of Thr-179 (By similarity).</text>
</comment>
<comment type="subunit">
    <text evidence="1">Homodimer; mediated via the coiled-coil region.</text>
</comment>
<comment type="subcellular location">
    <subcellularLocation>
        <location evidence="2">Cytoplasm</location>
    </subcellularLocation>
    <subcellularLocation>
        <location evidence="2">Nucleus</location>
    </subcellularLocation>
    <text evidence="2">The caspase-cleaved form cycles between nucleus and cytoplasm.</text>
</comment>
<comment type="similarity">
    <text evidence="7">Belongs to the protein kinase superfamily. STE Ser/Thr protein kinase family. STE20 subfamily.</text>
</comment>
<protein>
    <recommendedName>
        <fullName>Serine/threonine-protein kinase 3</fullName>
        <ecNumber>2.7.11.1</ecNumber>
    </recommendedName>
    <component>
        <recommendedName>
            <fullName>Serine/threonine-protein kinase 3 36kDa subunit</fullName>
            <shortName>MST2/N</shortName>
        </recommendedName>
    </component>
    <component>
        <recommendedName>
            <fullName>Serine/threonine-protein kinase 3 20kDa subunit</fullName>
            <shortName>MST2/C</shortName>
        </recommendedName>
    </component>
</protein>